<comment type="function">
    <text evidence="1">Catalyzes the isomerization between 2-isopropylmalate and 3-isopropylmalate, via the formation of 2-isopropylmaleate.</text>
</comment>
<comment type="catalytic activity">
    <reaction evidence="1">
        <text>(2R,3S)-3-isopropylmalate = (2S)-2-isopropylmalate</text>
        <dbReference type="Rhea" id="RHEA:32287"/>
        <dbReference type="ChEBI" id="CHEBI:1178"/>
        <dbReference type="ChEBI" id="CHEBI:35121"/>
        <dbReference type="EC" id="4.2.1.33"/>
    </reaction>
</comment>
<comment type="cofactor">
    <cofactor evidence="1">
        <name>[4Fe-4S] cluster</name>
        <dbReference type="ChEBI" id="CHEBI:49883"/>
    </cofactor>
    <text evidence="1">Binds 1 [4Fe-4S] cluster per subunit.</text>
</comment>
<comment type="pathway">
    <text evidence="1">Amino-acid biosynthesis; L-leucine biosynthesis; L-leucine from 3-methyl-2-oxobutanoate: step 2/4.</text>
</comment>
<comment type="subunit">
    <text evidence="1">Heterodimer of LeuC and LeuD.</text>
</comment>
<comment type="similarity">
    <text evidence="1">Belongs to the aconitase/IPM isomerase family. LeuC type 1 subfamily.</text>
</comment>
<name>LEUC_SYNJA</name>
<protein>
    <recommendedName>
        <fullName evidence="1">3-isopropylmalate dehydratase large subunit</fullName>
        <ecNumber evidence="1">4.2.1.33</ecNumber>
    </recommendedName>
    <alternativeName>
        <fullName evidence="1">Alpha-IPM isomerase</fullName>
        <shortName evidence="1">IPMI</shortName>
    </alternativeName>
    <alternativeName>
        <fullName evidence="1">Isopropylmalate isomerase</fullName>
    </alternativeName>
</protein>
<organism>
    <name type="scientific">Synechococcus sp. (strain JA-3-3Ab)</name>
    <name type="common">Cyanobacteria bacterium Yellowstone A-Prime</name>
    <dbReference type="NCBI Taxonomy" id="321327"/>
    <lineage>
        <taxon>Bacteria</taxon>
        <taxon>Bacillati</taxon>
        <taxon>Cyanobacteriota</taxon>
        <taxon>Cyanophyceae</taxon>
        <taxon>Synechococcales</taxon>
        <taxon>Synechococcaceae</taxon>
        <taxon>Synechococcus</taxon>
    </lineage>
</organism>
<accession>Q2JQU3</accession>
<sequence>MSERTLFDKVWDAHTVRVLPSGQTQLFIGLHLIHEVTSPQAFAMLRERNLPVLFPERTVATVDHIIPTDNRTRPFADPLAEEMIQELERNCRQYRIRFYNSGSGQQGIVHVIAPEQGLTQPGMTIACGDSHTSTHGAFGAIAFGIGTSQVRDVLATQTLALSKLKVRRIEVHGRLGPGVYAKDVILHIIRKLGVKGGVGYAYEYGGSTIEAMSMEERMTLCNMSIEGGARCGYVNPDAVTFEYLKGREFAPQGSDWEEAVAWWQSLASGPDAVYDDVVVFQAAEIAPTVTWGITPGQSIGVDERIPAPEELPESERELAKEAYAYMGLRPGDPIVGTPVDVCFIGSCTNGRLSDLREAAKIAKGQRVAPGVKAFVVPGSERVKQEAEREGLREIFEAAGFEWRDPGCSMCLAMNPDRLVGRQISASSSNRNFKGRQGSPSGRTLLMSPAMVAAAAVSGKVVDVRELL</sequence>
<proteinExistence type="inferred from homology"/>
<reference key="1">
    <citation type="journal article" date="2007" name="ISME J.">
        <title>Population level functional diversity in a microbial community revealed by comparative genomic and metagenomic analyses.</title>
        <authorList>
            <person name="Bhaya D."/>
            <person name="Grossman A.R."/>
            <person name="Steunou A.-S."/>
            <person name="Khuri N."/>
            <person name="Cohan F.M."/>
            <person name="Hamamura N."/>
            <person name="Melendrez M.C."/>
            <person name="Bateson M.M."/>
            <person name="Ward D.M."/>
            <person name="Heidelberg J.F."/>
        </authorList>
    </citation>
    <scope>NUCLEOTIDE SEQUENCE [LARGE SCALE GENOMIC DNA]</scope>
    <source>
        <strain>JA-3-3Ab</strain>
    </source>
</reference>
<evidence type="ECO:0000255" key="1">
    <source>
        <dbReference type="HAMAP-Rule" id="MF_01026"/>
    </source>
</evidence>
<feature type="chain" id="PRO_1000063621" description="3-isopropylmalate dehydratase large subunit">
    <location>
        <begin position="1"/>
        <end position="467"/>
    </location>
</feature>
<feature type="binding site" evidence="1">
    <location>
        <position position="347"/>
    </location>
    <ligand>
        <name>[4Fe-4S] cluster</name>
        <dbReference type="ChEBI" id="CHEBI:49883"/>
    </ligand>
</feature>
<feature type="binding site" evidence="1">
    <location>
        <position position="407"/>
    </location>
    <ligand>
        <name>[4Fe-4S] cluster</name>
        <dbReference type="ChEBI" id="CHEBI:49883"/>
    </ligand>
</feature>
<feature type="binding site" evidence="1">
    <location>
        <position position="410"/>
    </location>
    <ligand>
        <name>[4Fe-4S] cluster</name>
        <dbReference type="ChEBI" id="CHEBI:49883"/>
    </ligand>
</feature>
<keyword id="KW-0004">4Fe-4S</keyword>
<keyword id="KW-0028">Amino-acid biosynthesis</keyword>
<keyword id="KW-0100">Branched-chain amino acid biosynthesis</keyword>
<keyword id="KW-0408">Iron</keyword>
<keyword id="KW-0411">Iron-sulfur</keyword>
<keyword id="KW-0432">Leucine biosynthesis</keyword>
<keyword id="KW-0456">Lyase</keyword>
<keyword id="KW-0479">Metal-binding</keyword>
<gene>
    <name evidence="1" type="primary">leuC</name>
    <name type="ordered locus">CYA_0286</name>
</gene>
<dbReference type="EC" id="4.2.1.33" evidence="1"/>
<dbReference type="EMBL" id="CP000239">
    <property type="protein sequence ID" value="ABC98507.1"/>
    <property type="molecule type" value="Genomic_DNA"/>
</dbReference>
<dbReference type="RefSeq" id="WP_011429196.1">
    <property type="nucleotide sequence ID" value="NC_007775.1"/>
</dbReference>
<dbReference type="SMR" id="Q2JQU3"/>
<dbReference type="STRING" id="321327.CYA_0286"/>
<dbReference type="KEGG" id="cya:CYA_0286"/>
<dbReference type="eggNOG" id="COG0065">
    <property type="taxonomic scope" value="Bacteria"/>
</dbReference>
<dbReference type="HOGENOM" id="CLU_006714_3_4_3"/>
<dbReference type="OrthoDB" id="9802769at2"/>
<dbReference type="UniPathway" id="UPA00048">
    <property type="reaction ID" value="UER00071"/>
</dbReference>
<dbReference type="Proteomes" id="UP000008818">
    <property type="component" value="Chromosome"/>
</dbReference>
<dbReference type="GO" id="GO:0003861">
    <property type="term" value="F:3-isopropylmalate dehydratase activity"/>
    <property type="evidence" value="ECO:0007669"/>
    <property type="project" value="UniProtKB-UniRule"/>
</dbReference>
<dbReference type="GO" id="GO:0051539">
    <property type="term" value="F:4 iron, 4 sulfur cluster binding"/>
    <property type="evidence" value="ECO:0007669"/>
    <property type="project" value="UniProtKB-KW"/>
</dbReference>
<dbReference type="GO" id="GO:0046872">
    <property type="term" value="F:metal ion binding"/>
    <property type="evidence" value="ECO:0007669"/>
    <property type="project" value="UniProtKB-KW"/>
</dbReference>
<dbReference type="GO" id="GO:0009098">
    <property type="term" value="P:L-leucine biosynthetic process"/>
    <property type="evidence" value="ECO:0007669"/>
    <property type="project" value="UniProtKB-UniRule"/>
</dbReference>
<dbReference type="CDD" id="cd01583">
    <property type="entry name" value="IPMI"/>
    <property type="match status" value="1"/>
</dbReference>
<dbReference type="Gene3D" id="3.30.499.10">
    <property type="entry name" value="Aconitase, domain 3"/>
    <property type="match status" value="2"/>
</dbReference>
<dbReference type="HAMAP" id="MF_01026">
    <property type="entry name" value="LeuC_type1"/>
    <property type="match status" value="1"/>
</dbReference>
<dbReference type="InterPro" id="IPR004430">
    <property type="entry name" value="3-IsopropMal_deHydase_lsu"/>
</dbReference>
<dbReference type="InterPro" id="IPR015931">
    <property type="entry name" value="Acnase/IPM_dHydase_lsu_aba_1/3"/>
</dbReference>
<dbReference type="InterPro" id="IPR001030">
    <property type="entry name" value="Acoase/IPM_deHydtase_lsu_aba"/>
</dbReference>
<dbReference type="InterPro" id="IPR018136">
    <property type="entry name" value="Aconitase_4Fe-4S_BS"/>
</dbReference>
<dbReference type="InterPro" id="IPR036008">
    <property type="entry name" value="Aconitase_4Fe-4S_dom"/>
</dbReference>
<dbReference type="InterPro" id="IPR050067">
    <property type="entry name" value="IPM_dehydratase_rel_enz"/>
</dbReference>
<dbReference type="InterPro" id="IPR033941">
    <property type="entry name" value="IPMI_cat"/>
</dbReference>
<dbReference type="NCBIfam" id="TIGR00170">
    <property type="entry name" value="leuC"/>
    <property type="match status" value="1"/>
</dbReference>
<dbReference type="NCBIfam" id="NF004016">
    <property type="entry name" value="PRK05478.1"/>
    <property type="match status" value="1"/>
</dbReference>
<dbReference type="NCBIfam" id="NF009116">
    <property type="entry name" value="PRK12466.1"/>
    <property type="match status" value="1"/>
</dbReference>
<dbReference type="PANTHER" id="PTHR43822:SF9">
    <property type="entry name" value="3-ISOPROPYLMALATE DEHYDRATASE"/>
    <property type="match status" value="1"/>
</dbReference>
<dbReference type="PANTHER" id="PTHR43822">
    <property type="entry name" value="HOMOACONITASE, MITOCHONDRIAL-RELATED"/>
    <property type="match status" value="1"/>
</dbReference>
<dbReference type="Pfam" id="PF00330">
    <property type="entry name" value="Aconitase"/>
    <property type="match status" value="1"/>
</dbReference>
<dbReference type="PRINTS" id="PR00415">
    <property type="entry name" value="ACONITASE"/>
</dbReference>
<dbReference type="SUPFAM" id="SSF53732">
    <property type="entry name" value="Aconitase iron-sulfur domain"/>
    <property type="match status" value="1"/>
</dbReference>
<dbReference type="PROSITE" id="PS00450">
    <property type="entry name" value="ACONITASE_1"/>
    <property type="match status" value="1"/>
</dbReference>
<dbReference type="PROSITE" id="PS01244">
    <property type="entry name" value="ACONITASE_2"/>
    <property type="match status" value="1"/>
</dbReference>